<name>MATK_GUIAB</name>
<comment type="function">
    <text evidence="1">Usually encoded in the trnK tRNA gene intron. Probably assists in splicing its own and other chloroplast group II introns.</text>
</comment>
<comment type="subcellular location">
    <subcellularLocation>
        <location>Plastid</location>
        <location>Chloroplast</location>
    </subcellularLocation>
</comment>
<comment type="similarity">
    <text evidence="1">Belongs to the intron maturase 2 family. MatK subfamily.</text>
</comment>
<geneLocation type="chloroplast"/>
<keyword id="KW-0150">Chloroplast</keyword>
<keyword id="KW-0507">mRNA processing</keyword>
<keyword id="KW-0934">Plastid</keyword>
<keyword id="KW-0694">RNA-binding</keyword>
<keyword id="KW-0819">tRNA processing</keyword>
<accession>B2LMH4</accession>
<reference key="1">
    <citation type="submission" date="2008-03" db="EMBL/GenBank/DDBJ databases">
        <title>Guizotia abyssinica chloroplast sequenced using Solexa.</title>
        <authorList>
            <person name="Kane N.C."/>
            <person name="Dempewolf H."/>
            <person name="Stewart M.L."/>
            <person name="Cronk Q."/>
            <person name="Rieseberrg L.H."/>
        </authorList>
    </citation>
    <scope>NUCLEOTIDE SEQUENCE [LARGE SCALE GENOMIC DNA]</scope>
    <source>
        <strain>cv. PI 508077</strain>
    </source>
</reference>
<gene>
    <name evidence="1" type="primary">matK</name>
    <name type="ordered locus">GuabCp002</name>
</gene>
<organism>
    <name type="scientific">Guizotia abyssinica</name>
    <name type="common">Niger</name>
    <name type="synonym">Ramtilla</name>
    <dbReference type="NCBI Taxonomy" id="4230"/>
    <lineage>
        <taxon>Eukaryota</taxon>
        <taxon>Viridiplantae</taxon>
        <taxon>Streptophyta</taxon>
        <taxon>Embryophyta</taxon>
        <taxon>Tracheophyta</taxon>
        <taxon>Spermatophyta</taxon>
        <taxon>Magnoliopsida</taxon>
        <taxon>eudicotyledons</taxon>
        <taxon>Gunneridae</taxon>
        <taxon>Pentapetalae</taxon>
        <taxon>asterids</taxon>
        <taxon>campanulids</taxon>
        <taxon>Asterales</taxon>
        <taxon>Asteraceae</taxon>
        <taxon>Asteroideae</taxon>
        <taxon>Heliantheae alliance</taxon>
        <taxon>Millerieae</taxon>
        <taxon>Guizotia</taxon>
    </lineage>
</organism>
<sequence length="504" mass="59138">MDKFQSYLGLDRSHYFLYPLIFQEYIYVLAHDHGLNGSVLLENAGYDNKSSLLIVKRLIIRMYQQNHLILSVNDSKQTPFLGHNKNFYSQVMSEVSSTIMEIPLSLRLISSLERKGVVKSDNLRSIHSIFSFLEDNFSHLNYVLDILIPYPAHMEILVQALRYWIKDASSLHLLRFFLHECHNWDSLITSNSKKAGSSFSKRNHRLFFFLYTSYVCEYESGFLFLRNQSSHLRSTSSGSLIERIYFYGKIEYLAEVFAGAFQANLWLFKDSFMHYVRYQGKSILASKGTFILMNKWKYYFVNFWKSYFYLWSQPGRIYINQLSNHSLDFLGYRSSVRLKPSMVRGQMLENTFLIDNAIKKFDSIVPIMPLVGSLAKSKFCNALGHPIGKAVWADLSDSDIIERFGRIYRNLSHYHSGSSKKKSLYRVKYILRLSCARTLARKHKSTVRAFLKRFGSRLLEEFFTEEEQVFSLTFPRVSSISRRLSRRRIWYLDIVCINDLANHE</sequence>
<evidence type="ECO:0000255" key="1">
    <source>
        <dbReference type="HAMAP-Rule" id="MF_01390"/>
    </source>
</evidence>
<proteinExistence type="inferred from homology"/>
<protein>
    <recommendedName>
        <fullName evidence="1">Maturase K</fullName>
    </recommendedName>
    <alternativeName>
        <fullName evidence="1">Intron maturase</fullName>
    </alternativeName>
</protein>
<feature type="chain" id="PRO_0000355937" description="Maturase K">
    <location>
        <begin position="1"/>
        <end position="504"/>
    </location>
</feature>
<dbReference type="EMBL" id="EU549769">
    <property type="protein sequence ID" value="ACB86508.1"/>
    <property type="molecule type" value="Genomic_DNA"/>
</dbReference>
<dbReference type="RefSeq" id="YP_001837341.1">
    <property type="nucleotide sequence ID" value="NC_010601.1"/>
</dbReference>
<dbReference type="GeneID" id="6219167"/>
<dbReference type="GO" id="GO:0009507">
    <property type="term" value="C:chloroplast"/>
    <property type="evidence" value="ECO:0007669"/>
    <property type="project" value="UniProtKB-SubCell"/>
</dbReference>
<dbReference type="GO" id="GO:0003723">
    <property type="term" value="F:RNA binding"/>
    <property type="evidence" value="ECO:0007669"/>
    <property type="project" value="UniProtKB-KW"/>
</dbReference>
<dbReference type="GO" id="GO:0006397">
    <property type="term" value="P:mRNA processing"/>
    <property type="evidence" value="ECO:0007669"/>
    <property type="project" value="UniProtKB-KW"/>
</dbReference>
<dbReference type="GO" id="GO:0008380">
    <property type="term" value="P:RNA splicing"/>
    <property type="evidence" value="ECO:0007669"/>
    <property type="project" value="UniProtKB-UniRule"/>
</dbReference>
<dbReference type="GO" id="GO:0008033">
    <property type="term" value="P:tRNA processing"/>
    <property type="evidence" value="ECO:0007669"/>
    <property type="project" value="UniProtKB-KW"/>
</dbReference>
<dbReference type="HAMAP" id="MF_01390">
    <property type="entry name" value="MatK"/>
    <property type="match status" value="1"/>
</dbReference>
<dbReference type="InterPro" id="IPR024937">
    <property type="entry name" value="Domain_X"/>
</dbReference>
<dbReference type="InterPro" id="IPR002866">
    <property type="entry name" value="Maturase_MatK"/>
</dbReference>
<dbReference type="InterPro" id="IPR024942">
    <property type="entry name" value="Maturase_MatK_N"/>
</dbReference>
<dbReference type="PANTHER" id="PTHR34811">
    <property type="entry name" value="MATURASE K"/>
    <property type="match status" value="1"/>
</dbReference>
<dbReference type="PANTHER" id="PTHR34811:SF1">
    <property type="entry name" value="MATURASE K"/>
    <property type="match status" value="1"/>
</dbReference>
<dbReference type="Pfam" id="PF01348">
    <property type="entry name" value="Intron_maturas2"/>
    <property type="match status" value="1"/>
</dbReference>
<dbReference type="Pfam" id="PF01824">
    <property type="entry name" value="MatK_N"/>
    <property type="match status" value="1"/>
</dbReference>